<reference key="1">
    <citation type="journal article" date="2008" name="PLoS ONE">
        <title>Genome biology of Actinobacillus pleuropneumoniae JL03, an isolate of serotype 3 prevalent in China.</title>
        <authorList>
            <person name="Xu Z."/>
            <person name="Zhou Y."/>
            <person name="Li L."/>
            <person name="Zhou R."/>
            <person name="Xiao S."/>
            <person name="Wan Y."/>
            <person name="Zhang S."/>
            <person name="Wang K."/>
            <person name="Li W."/>
            <person name="Li L."/>
            <person name="Jin H."/>
            <person name="Kang M."/>
            <person name="Dalai B."/>
            <person name="Li T."/>
            <person name="Liu L."/>
            <person name="Cheng Y."/>
            <person name="Zhang L."/>
            <person name="Xu T."/>
            <person name="Zheng H."/>
            <person name="Pu S."/>
            <person name="Wang B."/>
            <person name="Gu W."/>
            <person name="Zhang X.L."/>
            <person name="Zhu G.-F."/>
            <person name="Wang S."/>
            <person name="Zhao G.-P."/>
            <person name="Chen H."/>
        </authorList>
    </citation>
    <scope>NUCLEOTIDE SEQUENCE [LARGE SCALE GENOMIC DNA]</scope>
    <source>
        <strain>JL03</strain>
    </source>
</reference>
<sequence>MMTKEAPLIALVAGEISGDILGAGLINALKLHYPNARFIGVAGPRMIQAGCETLFDMEELAVMGLAEVVKYLPRLLKRRKQVIETMLAEKPDIFIGIDAPDFNLTVEEKLKASGIKAIHYVSPSVWAWRQNRVQKIARATNLVLAFLPFEKAFYDRFNVPCRFIGHTMADAIALKPNRSEACATLNLDETQRYLAILVGSRASEVRFLAEPFLKAAQILKQQYPDLQFLVPLVNDKRIAQFEQIKAQVAPELSVHILKGNARQAMIAAEASLLASGTAALEGMLCKSPMVVGYKMKAMTYWLAKRLVKTKYISLPNLLADEMLVPELIQDECNPENLAWYLGNYLADDADHRKQRNELKQRFTELHKLIQCDADAQAAQAVVDVLEANTSDQN</sequence>
<keyword id="KW-0328">Glycosyltransferase</keyword>
<keyword id="KW-0441">Lipid A biosynthesis</keyword>
<keyword id="KW-0444">Lipid biosynthesis</keyword>
<keyword id="KW-0443">Lipid metabolism</keyword>
<keyword id="KW-0808">Transferase</keyword>
<comment type="function">
    <text evidence="1">Condensation of UDP-2,3-diacylglucosamine and 2,3-diacylglucosamine-1-phosphate to form lipid A disaccharide, a precursor of lipid A, a phosphorylated glycolipid that anchors the lipopolysaccharide to the outer membrane of the cell.</text>
</comment>
<comment type="catalytic activity">
    <reaction evidence="1">
        <text>a lipid X + a UDP-2-N,3-O-bis[(3R)-3-hydroxyacyl]-alpha-D-glucosamine = a lipid A disaccharide + UDP + H(+)</text>
        <dbReference type="Rhea" id="RHEA:67828"/>
        <dbReference type="ChEBI" id="CHEBI:15378"/>
        <dbReference type="ChEBI" id="CHEBI:58223"/>
        <dbReference type="ChEBI" id="CHEBI:137748"/>
        <dbReference type="ChEBI" id="CHEBI:176338"/>
        <dbReference type="ChEBI" id="CHEBI:176343"/>
        <dbReference type="EC" id="2.4.1.182"/>
    </reaction>
</comment>
<comment type="pathway">
    <text evidence="1">Bacterial outer membrane biogenesis; LPS lipid A biosynthesis.</text>
</comment>
<comment type="similarity">
    <text evidence="1">Belongs to the LpxB family.</text>
</comment>
<evidence type="ECO:0000255" key="1">
    <source>
        <dbReference type="HAMAP-Rule" id="MF_00392"/>
    </source>
</evidence>
<name>LPXB_ACTPJ</name>
<organism>
    <name type="scientific">Actinobacillus pleuropneumoniae serotype 3 (strain JL03)</name>
    <dbReference type="NCBI Taxonomy" id="434271"/>
    <lineage>
        <taxon>Bacteria</taxon>
        <taxon>Pseudomonadati</taxon>
        <taxon>Pseudomonadota</taxon>
        <taxon>Gammaproteobacteria</taxon>
        <taxon>Pasteurellales</taxon>
        <taxon>Pasteurellaceae</taxon>
        <taxon>Actinobacillus</taxon>
    </lineage>
</organism>
<accession>B0BRG6</accession>
<feature type="chain" id="PRO_1000191456" description="Lipid-A-disaccharide synthase">
    <location>
        <begin position="1"/>
        <end position="393"/>
    </location>
</feature>
<dbReference type="EC" id="2.4.1.182" evidence="1"/>
<dbReference type="EMBL" id="CP000687">
    <property type="protein sequence ID" value="ABY68614.1"/>
    <property type="molecule type" value="Genomic_DNA"/>
</dbReference>
<dbReference type="RefSeq" id="WP_012262660.1">
    <property type="nucleotide sequence ID" value="NC_010278.1"/>
</dbReference>
<dbReference type="SMR" id="B0BRG6"/>
<dbReference type="CAZy" id="GT19">
    <property type="family name" value="Glycosyltransferase Family 19"/>
</dbReference>
<dbReference type="KEGG" id="apj:APJL_0008"/>
<dbReference type="HOGENOM" id="CLU_036577_3_0_6"/>
<dbReference type="UniPathway" id="UPA00973"/>
<dbReference type="Proteomes" id="UP000008547">
    <property type="component" value="Chromosome"/>
</dbReference>
<dbReference type="GO" id="GO:0016020">
    <property type="term" value="C:membrane"/>
    <property type="evidence" value="ECO:0007669"/>
    <property type="project" value="GOC"/>
</dbReference>
<dbReference type="GO" id="GO:0008915">
    <property type="term" value="F:lipid-A-disaccharide synthase activity"/>
    <property type="evidence" value="ECO:0007669"/>
    <property type="project" value="UniProtKB-UniRule"/>
</dbReference>
<dbReference type="GO" id="GO:0005543">
    <property type="term" value="F:phospholipid binding"/>
    <property type="evidence" value="ECO:0007669"/>
    <property type="project" value="TreeGrafter"/>
</dbReference>
<dbReference type="GO" id="GO:0009245">
    <property type="term" value="P:lipid A biosynthetic process"/>
    <property type="evidence" value="ECO:0007669"/>
    <property type="project" value="UniProtKB-UniRule"/>
</dbReference>
<dbReference type="CDD" id="cd01635">
    <property type="entry name" value="Glycosyltransferase_GTB-type"/>
    <property type="match status" value="1"/>
</dbReference>
<dbReference type="HAMAP" id="MF_00392">
    <property type="entry name" value="LpxB"/>
    <property type="match status" value="1"/>
</dbReference>
<dbReference type="InterPro" id="IPR003835">
    <property type="entry name" value="Glyco_trans_19"/>
</dbReference>
<dbReference type="NCBIfam" id="TIGR00215">
    <property type="entry name" value="lpxB"/>
    <property type="match status" value="1"/>
</dbReference>
<dbReference type="PANTHER" id="PTHR30372">
    <property type="entry name" value="LIPID-A-DISACCHARIDE SYNTHASE"/>
    <property type="match status" value="1"/>
</dbReference>
<dbReference type="PANTHER" id="PTHR30372:SF4">
    <property type="entry name" value="LIPID-A-DISACCHARIDE SYNTHASE, MITOCHONDRIAL-RELATED"/>
    <property type="match status" value="1"/>
</dbReference>
<dbReference type="Pfam" id="PF02684">
    <property type="entry name" value="LpxB"/>
    <property type="match status" value="1"/>
</dbReference>
<dbReference type="SUPFAM" id="SSF53756">
    <property type="entry name" value="UDP-Glycosyltransferase/glycogen phosphorylase"/>
    <property type="match status" value="1"/>
</dbReference>
<gene>
    <name evidence="1" type="primary">lpxB</name>
    <name type="ordered locus">APJL_0008</name>
</gene>
<proteinExistence type="inferred from homology"/>
<protein>
    <recommendedName>
        <fullName evidence="1">Lipid-A-disaccharide synthase</fullName>
        <ecNumber evidence="1">2.4.1.182</ecNumber>
    </recommendedName>
</protein>